<comment type="function">
    <text evidence="1">Together with its co-chaperonin GroES, plays an essential role in assisting protein folding. The GroEL-GroES system forms a nano-cage that allows encapsulation of the non-native substrate proteins and provides a physical environment optimized to promote and accelerate protein folding.</text>
</comment>
<comment type="catalytic activity">
    <reaction evidence="1">
        <text>ATP + H2O + a folded polypeptide = ADP + phosphate + an unfolded polypeptide.</text>
        <dbReference type="EC" id="5.6.1.7"/>
    </reaction>
</comment>
<comment type="subunit">
    <text evidence="1">Forms a cylinder of 14 subunits composed of two heptameric rings stacked back-to-back. Interacts with the co-chaperonin GroES.</text>
</comment>
<comment type="subcellular location">
    <subcellularLocation>
        <location evidence="1">Cytoplasm</location>
    </subcellularLocation>
</comment>
<comment type="similarity">
    <text evidence="1">Belongs to the chaperonin (HSP60) family.</text>
</comment>
<keyword id="KW-0067">ATP-binding</keyword>
<keyword id="KW-0143">Chaperone</keyword>
<keyword id="KW-0963">Cytoplasm</keyword>
<keyword id="KW-0413">Isomerase</keyword>
<keyword id="KW-0547">Nucleotide-binding</keyword>
<keyword id="KW-1185">Reference proteome</keyword>
<gene>
    <name evidence="1" type="primary">groEL</name>
    <name evidence="1" type="synonym">groL</name>
    <name type="ordered locus">DVU_1976</name>
</gene>
<reference key="1">
    <citation type="journal article" date="2004" name="Nat. Biotechnol.">
        <title>The genome sequence of the anaerobic, sulfate-reducing bacterium Desulfovibrio vulgaris Hildenborough.</title>
        <authorList>
            <person name="Heidelberg J.F."/>
            <person name="Seshadri R."/>
            <person name="Haveman S.A."/>
            <person name="Hemme C.L."/>
            <person name="Paulsen I.T."/>
            <person name="Kolonay J.F."/>
            <person name="Eisen J.A."/>
            <person name="Ward N.L."/>
            <person name="Methe B.A."/>
            <person name="Brinkac L.M."/>
            <person name="Daugherty S.C."/>
            <person name="DeBoy R.T."/>
            <person name="Dodson R.J."/>
            <person name="Durkin A.S."/>
            <person name="Madupu R."/>
            <person name="Nelson W.C."/>
            <person name="Sullivan S.A."/>
            <person name="Fouts D.E."/>
            <person name="Haft D.H."/>
            <person name="Selengut J."/>
            <person name="Peterson J.D."/>
            <person name="Davidsen T.M."/>
            <person name="Zafar N."/>
            <person name="Zhou L."/>
            <person name="Radune D."/>
            <person name="Dimitrov G."/>
            <person name="Hance M."/>
            <person name="Tran K."/>
            <person name="Khouri H.M."/>
            <person name="Gill J."/>
            <person name="Utterback T.R."/>
            <person name="Feldblyum T.V."/>
            <person name="Wall J.D."/>
            <person name="Voordouw G."/>
            <person name="Fraser C.M."/>
        </authorList>
    </citation>
    <scope>NUCLEOTIDE SEQUENCE [LARGE SCALE GENOMIC DNA]</scope>
    <source>
        <strain>ATCC 29579 / DSM 644 / CCUG 34227 / NCIMB 8303 / VKM B-1760 / Hildenborough</strain>
    </source>
</reference>
<sequence length="547" mass="58389">MASKEILFDTKAREKLSRGVDKLANAVKVTLGPKGRNVVIEKSFGSPVITKDGVSVAKEIELEDKFENMGAQMVKEVASKTSDIAGDGTTTATILAQAIYREGVKLVAAGRNPMAIKRGVDKAVESLVRELGNLAKPTRDQKEIAQVGTISANSDSTIGNIIAEAMSKVGKEGVITVEEAKGLETTLEVVEGMQFDRGYLSPYFVTDPEKMVCELDEPFILCNEKKISTMKDMLPVLEQVAKMQRPLVIIAEDVDGEALATLVVNKLRGALQVVAIKAPGFGERRKAMLQDIAVLTGGQVVSEDMGIKLENISVADLGTAKRVVIDKENTTIVDGAGKGDDIKARVKQIRAQIEETTSDYDREKLQERLAKLVGGVAVIHVGAATETEMKEKKDRVEDALNATRAAVEEGIVPGGGTALVRVAKVLDDIKPADDDETAGVNIIRRAIEEPLRQIASNAGFEGSIVVERVREGKDGFGFNAATGEYEDLIGVGVIDPKKVTRIALQNAASVASLLLTTECAIAEKPEPKKDMPMPGGMGGMGGMGGMY</sequence>
<organism>
    <name type="scientific">Nitratidesulfovibrio vulgaris (strain ATCC 29579 / DSM 644 / CCUG 34227 / NCIMB 8303 / VKM B-1760 / Hildenborough)</name>
    <name type="common">Desulfovibrio vulgaris</name>
    <dbReference type="NCBI Taxonomy" id="882"/>
    <lineage>
        <taxon>Bacteria</taxon>
        <taxon>Pseudomonadati</taxon>
        <taxon>Thermodesulfobacteriota</taxon>
        <taxon>Desulfovibrionia</taxon>
        <taxon>Desulfovibrionales</taxon>
        <taxon>Desulfovibrionaceae</taxon>
        <taxon>Nitratidesulfovibrio</taxon>
    </lineage>
</organism>
<feature type="chain" id="PRO_0000063357" description="Chaperonin GroEL">
    <location>
        <begin position="1"/>
        <end position="547"/>
    </location>
</feature>
<feature type="binding site" evidence="1">
    <location>
        <begin position="30"/>
        <end position="33"/>
    </location>
    <ligand>
        <name>ATP</name>
        <dbReference type="ChEBI" id="CHEBI:30616"/>
    </ligand>
</feature>
<feature type="binding site" evidence="1">
    <location>
        <position position="51"/>
    </location>
    <ligand>
        <name>ATP</name>
        <dbReference type="ChEBI" id="CHEBI:30616"/>
    </ligand>
</feature>
<feature type="binding site" evidence="1">
    <location>
        <begin position="87"/>
        <end position="91"/>
    </location>
    <ligand>
        <name>ATP</name>
        <dbReference type="ChEBI" id="CHEBI:30616"/>
    </ligand>
</feature>
<feature type="binding site" evidence="1">
    <location>
        <position position="415"/>
    </location>
    <ligand>
        <name>ATP</name>
        <dbReference type="ChEBI" id="CHEBI:30616"/>
    </ligand>
</feature>
<feature type="binding site" evidence="1">
    <location>
        <begin position="479"/>
        <end position="481"/>
    </location>
    <ligand>
        <name>ATP</name>
        <dbReference type="ChEBI" id="CHEBI:30616"/>
    </ligand>
</feature>
<feature type="binding site" evidence="1">
    <location>
        <position position="495"/>
    </location>
    <ligand>
        <name>ATP</name>
        <dbReference type="ChEBI" id="CHEBI:30616"/>
    </ligand>
</feature>
<proteinExistence type="inferred from homology"/>
<accession>Q72AL6</accession>
<dbReference type="EC" id="5.6.1.7" evidence="1"/>
<dbReference type="EMBL" id="AE017285">
    <property type="protein sequence ID" value="AAS96452.1"/>
    <property type="molecule type" value="Genomic_DNA"/>
</dbReference>
<dbReference type="RefSeq" id="WP_010939262.1">
    <property type="nucleotide sequence ID" value="NC_002937.3"/>
</dbReference>
<dbReference type="RefSeq" id="YP_011193.1">
    <property type="nucleotide sequence ID" value="NC_002937.3"/>
</dbReference>
<dbReference type="SMR" id="Q72AL6"/>
<dbReference type="STRING" id="882.DVU_1976"/>
<dbReference type="PaxDb" id="882-DVU_1976"/>
<dbReference type="EnsemblBacteria" id="AAS96452">
    <property type="protein sequence ID" value="AAS96452"/>
    <property type="gene ID" value="DVU_1976"/>
</dbReference>
<dbReference type="KEGG" id="dvu:DVU_1976"/>
<dbReference type="PATRIC" id="fig|882.5.peg.1815"/>
<dbReference type="eggNOG" id="COG0459">
    <property type="taxonomic scope" value="Bacteria"/>
</dbReference>
<dbReference type="HOGENOM" id="CLU_016503_3_0_7"/>
<dbReference type="OrthoDB" id="9766614at2"/>
<dbReference type="PhylomeDB" id="Q72AL6"/>
<dbReference type="Proteomes" id="UP000002194">
    <property type="component" value="Chromosome"/>
</dbReference>
<dbReference type="GO" id="GO:0005737">
    <property type="term" value="C:cytoplasm"/>
    <property type="evidence" value="ECO:0007669"/>
    <property type="project" value="UniProtKB-SubCell"/>
</dbReference>
<dbReference type="GO" id="GO:0005524">
    <property type="term" value="F:ATP binding"/>
    <property type="evidence" value="ECO:0007669"/>
    <property type="project" value="UniProtKB-UniRule"/>
</dbReference>
<dbReference type="GO" id="GO:0140662">
    <property type="term" value="F:ATP-dependent protein folding chaperone"/>
    <property type="evidence" value="ECO:0007669"/>
    <property type="project" value="InterPro"/>
</dbReference>
<dbReference type="GO" id="GO:0016853">
    <property type="term" value="F:isomerase activity"/>
    <property type="evidence" value="ECO:0007669"/>
    <property type="project" value="UniProtKB-KW"/>
</dbReference>
<dbReference type="GO" id="GO:0051082">
    <property type="term" value="F:unfolded protein binding"/>
    <property type="evidence" value="ECO:0007669"/>
    <property type="project" value="UniProtKB-UniRule"/>
</dbReference>
<dbReference type="GO" id="GO:0042026">
    <property type="term" value="P:protein refolding"/>
    <property type="evidence" value="ECO:0007669"/>
    <property type="project" value="UniProtKB-UniRule"/>
</dbReference>
<dbReference type="CDD" id="cd03344">
    <property type="entry name" value="GroEL"/>
    <property type="match status" value="1"/>
</dbReference>
<dbReference type="FunFam" id="3.50.7.10:FF:000001">
    <property type="entry name" value="60 kDa chaperonin"/>
    <property type="match status" value="1"/>
</dbReference>
<dbReference type="Gene3D" id="3.50.7.10">
    <property type="entry name" value="GroEL"/>
    <property type="match status" value="1"/>
</dbReference>
<dbReference type="Gene3D" id="1.10.560.10">
    <property type="entry name" value="GroEL-like equatorial domain"/>
    <property type="match status" value="1"/>
</dbReference>
<dbReference type="Gene3D" id="3.30.260.10">
    <property type="entry name" value="TCP-1-like chaperonin intermediate domain"/>
    <property type="match status" value="1"/>
</dbReference>
<dbReference type="HAMAP" id="MF_00600">
    <property type="entry name" value="CH60"/>
    <property type="match status" value="1"/>
</dbReference>
<dbReference type="InterPro" id="IPR018370">
    <property type="entry name" value="Chaperonin_Cpn60_CS"/>
</dbReference>
<dbReference type="InterPro" id="IPR001844">
    <property type="entry name" value="Cpn60/GroEL"/>
</dbReference>
<dbReference type="InterPro" id="IPR002423">
    <property type="entry name" value="Cpn60/GroEL/TCP-1"/>
</dbReference>
<dbReference type="InterPro" id="IPR027409">
    <property type="entry name" value="GroEL-like_apical_dom_sf"/>
</dbReference>
<dbReference type="InterPro" id="IPR027413">
    <property type="entry name" value="GROEL-like_equatorial_sf"/>
</dbReference>
<dbReference type="InterPro" id="IPR027410">
    <property type="entry name" value="TCP-1-like_intermed_sf"/>
</dbReference>
<dbReference type="NCBIfam" id="TIGR02348">
    <property type="entry name" value="GroEL"/>
    <property type="match status" value="1"/>
</dbReference>
<dbReference type="NCBIfam" id="NF000592">
    <property type="entry name" value="PRK00013.1"/>
    <property type="match status" value="1"/>
</dbReference>
<dbReference type="NCBIfam" id="NF009487">
    <property type="entry name" value="PRK12849.1"/>
    <property type="match status" value="1"/>
</dbReference>
<dbReference type="NCBIfam" id="NF009488">
    <property type="entry name" value="PRK12850.1"/>
    <property type="match status" value="1"/>
</dbReference>
<dbReference type="NCBIfam" id="NF009489">
    <property type="entry name" value="PRK12851.1"/>
    <property type="match status" value="1"/>
</dbReference>
<dbReference type="PANTHER" id="PTHR45633">
    <property type="entry name" value="60 KDA HEAT SHOCK PROTEIN, MITOCHONDRIAL"/>
    <property type="match status" value="1"/>
</dbReference>
<dbReference type="Pfam" id="PF00118">
    <property type="entry name" value="Cpn60_TCP1"/>
    <property type="match status" value="1"/>
</dbReference>
<dbReference type="PRINTS" id="PR00298">
    <property type="entry name" value="CHAPERONIN60"/>
</dbReference>
<dbReference type="SUPFAM" id="SSF52029">
    <property type="entry name" value="GroEL apical domain-like"/>
    <property type="match status" value="1"/>
</dbReference>
<dbReference type="SUPFAM" id="SSF48592">
    <property type="entry name" value="GroEL equatorial domain-like"/>
    <property type="match status" value="1"/>
</dbReference>
<dbReference type="SUPFAM" id="SSF54849">
    <property type="entry name" value="GroEL-intermediate domain like"/>
    <property type="match status" value="1"/>
</dbReference>
<dbReference type="PROSITE" id="PS00296">
    <property type="entry name" value="CHAPERONINS_CPN60"/>
    <property type="match status" value="1"/>
</dbReference>
<evidence type="ECO:0000255" key="1">
    <source>
        <dbReference type="HAMAP-Rule" id="MF_00600"/>
    </source>
</evidence>
<name>CH60_NITV2</name>
<protein>
    <recommendedName>
        <fullName evidence="1">Chaperonin GroEL</fullName>
        <ecNumber evidence="1">5.6.1.7</ecNumber>
    </recommendedName>
    <alternativeName>
        <fullName evidence="1">60 kDa chaperonin</fullName>
    </alternativeName>
    <alternativeName>
        <fullName evidence="1">Chaperonin-60</fullName>
        <shortName evidence="1">Cpn60</shortName>
    </alternativeName>
</protein>